<sequence length="410" mass="44390">MQNRLSSTRRLGRRALLFPLCLVLYEFATYIGNDMIQPGMLSVVQTFGVDESWVPTSMTAYLAGGMFLQWLLGPISDRIGRRPVMLTGTLYFAVTCLAILLTNSIEQFTLMRFLQGISLCFIGAVGYAAIQESFEESVCIKITALMANVALIAPLLGPLAGAAWVHLFPWEGMFILFAALSLLAFLGLYKAMPETATRRGETLSLSALGHDYALVLKNKRFLGGALACGFASLPLLAWIAQSPVIIISGEGLSSYDYGMLQVPIFGMLILGNFTLARLSGRRPVRRLIQLGAWPMVGGLAIAAVSTLYSAHAYLWMTAGLSLYAFGIGLANAGLYRLTLFSSTMSKGTVSAAMGMISMFIYTLGIEVGKHAWLLGGNGAFNLFNLISGLLWLALVALMLRDKRVGGTTER</sequence>
<comment type="function">
    <text evidence="1">Efflux pump driven by the proton motive force. Confers resistance to a broad spectrum of chemically unrelated drugs (By similarity).</text>
</comment>
<comment type="subunit">
    <text evidence="1">Monomer.</text>
</comment>
<comment type="subcellular location">
    <subcellularLocation>
        <location evidence="1">Cell inner membrane</location>
        <topology evidence="1">Multi-pass membrane protein</topology>
    </subcellularLocation>
</comment>
<comment type="similarity">
    <text evidence="3">Belongs to the major facilitator superfamily. MdfA family.</text>
</comment>
<comment type="sequence caution" evidence="3">
    <conflict type="erroneous initiation">
        <sequence resource="EMBL-CDS" id="ADM43253"/>
    </conflict>
    <text>Truncated N-terminus.</text>
</comment>
<dbReference type="EMBL" id="CP002154">
    <property type="protein sequence ID" value="ADM43253.1"/>
    <property type="status" value="ALT_INIT"/>
    <property type="molecule type" value="Genomic_DNA"/>
</dbReference>
<dbReference type="SMR" id="E0T2N0"/>
<dbReference type="KEGG" id="etd:ETAF_3150"/>
<dbReference type="PATRIC" id="fig|718251.5.peg.3283"/>
<dbReference type="HOGENOM" id="CLU_001265_47_2_6"/>
<dbReference type="Proteomes" id="UP000002230">
    <property type="component" value="Chromosome"/>
</dbReference>
<dbReference type="GO" id="GO:0005886">
    <property type="term" value="C:plasma membrane"/>
    <property type="evidence" value="ECO:0007669"/>
    <property type="project" value="UniProtKB-SubCell"/>
</dbReference>
<dbReference type="GO" id="GO:0015385">
    <property type="term" value="F:sodium:proton antiporter activity"/>
    <property type="evidence" value="ECO:0007669"/>
    <property type="project" value="TreeGrafter"/>
</dbReference>
<dbReference type="GO" id="GO:0046677">
    <property type="term" value="P:response to antibiotic"/>
    <property type="evidence" value="ECO:0007669"/>
    <property type="project" value="UniProtKB-KW"/>
</dbReference>
<dbReference type="GO" id="GO:1990961">
    <property type="term" value="P:xenobiotic detoxification by transmembrane export across the plasma membrane"/>
    <property type="evidence" value="ECO:0007669"/>
    <property type="project" value="TreeGrafter"/>
</dbReference>
<dbReference type="CDD" id="cd17320">
    <property type="entry name" value="MFS_MdfA_MDR_like"/>
    <property type="match status" value="1"/>
</dbReference>
<dbReference type="Gene3D" id="1.20.1720.10">
    <property type="entry name" value="Multidrug resistance protein D"/>
    <property type="match status" value="1"/>
</dbReference>
<dbReference type="InterPro" id="IPR011701">
    <property type="entry name" value="MFS"/>
</dbReference>
<dbReference type="InterPro" id="IPR020846">
    <property type="entry name" value="MFS_dom"/>
</dbReference>
<dbReference type="InterPro" id="IPR036259">
    <property type="entry name" value="MFS_trans_sf"/>
</dbReference>
<dbReference type="InterPro" id="IPR005829">
    <property type="entry name" value="Sugar_transporter_CS"/>
</dbReference>
<dbReference type="NCBIfam" id="NF011931">
    <property type="entry name" value="PRK15402.1"/>
    <property type="match status" value="1"/>
</dbReference>
<dbReference type="PANTHER" id="PTHR23502">
    <property type="entry name" value="MAJOR FACILITATOR SUPERFAMILY"/>
    <property type="match status" value="1"/>
</dbReference>
<dbReference type="PANTHER" id="PTHR23502:SF43">
    <property type="entry name" value="MULTIDRUG TRANSPORTER MDFA"/>
    <property type="match status" value="1"/>
</dbReference>
<dbReference type="Pfam" id="PF07690">
    <property type="entry name" value="MFS_1"/>
    <property type="match status" value="1"/>
</dbReference>
<dbReference type="SUPFAM" id="SSF103473">
    <property type="entry name" value="MFS general substrate transporter"/>
    <property type="match status" value="1"/>
</dbReference>
<dbReference type="PROSITE" id="PS50850">
    <property type="entry name" value="MFS"/>
    <property type="match status" value="1"/>
</dbReference>
<proteinExistence type="inferred from homology"/>
<feature type="chain" id="PRO_0000405337" description="Multidrug transporter MdfA">
    <location>
        <begin position="1"/>
        <end position="410"/>
    </location>
</feature>
<feature type="topological domain" description="Cytoplasmic" evidence="2">
    <location>
        <begin position="1"/>
        <end position="15"/>
    </location>
</feature>
<feature type="transmembrane region" description="Helical" evidence="2">
    <location>
        <begin position="16"/>
        <end position="36"/>
    </location>
</feature>
<feature type="topological domain" description="Periplasmic" evidence="2">
    <location>
        <begin position="37"/>
        <end position="52"/>
    </location>
</feature>
<feature type="transmembrane region" description="Helical" evidence="2">
    <location>
        <begin position="53"/>
        <end position="73"/>
    </location>
</feature>
<feature type="topological domain" description="Cytoplasmic" evidence="2">
    <location>
        <begin position="74"/>
        <end position="84"/>
    </location>
</feature>
<feature type="transmembrane region" description="Helical" evidence="2">
    <location>
        <begin position="85"/>
        <end position="105"/>
    </location>
</feature>
<feature type="topological domain" description="Periplasmic" evidence="2">
    <location>
        <begin position="106"/>
        <end position="109"/>
    </location>
</feature>
<feature type="transmembrane region" description="Helical" evidence="2">
    <location>
        <begin position="110"/>
        <end position="130"/>
    </location>
</feature>
<feature type="topological domain" description="Cytoplasmic" evidence="2">
    <location>
        <begin position="131"/>
        <end position="144"/>
    </location>
</feature>
<feature type="transmembrane region" description="Helical" evidence="2">
    <location>
        <begin position="145"/>
        <end position="165"/>
    </location>
</feature>
<feature type="topological domain" description="Periplasmic" evidence="2">
    <location>
        <position position="166"/>
    </location>
</feature>
<feature type="transmembrane region" description="Helical" evidence="2">
    <location>
        <begin position="167"/>
        <end position="187"/>
    </location>
</feature>
<feature type="topological domain" description="Cytoplasmic" evidence="2">
    <location>
        <begin position="188"/>
        <end position="226"/>
    </location>
</feature>
<feature type="transmembrane region" description="Helical" evidence="2">
    <location>
        <begin position="227"/>
        <end position="247"/>
    </location>
</feature>
<feature type="topological domain" description="Periplasmic" evidence="2">
    <location>
        <begin position="248"/>
        <end position="255"/>
    </location>
</feature>
<feature type="transmembrane region" description="Helical" evidence="2">
    <location>
        <begin position="256"/>
        <end position="276"/>
    </location>
</feature>
<feature type="topological domain" description="Cytoplasmic" evidence="2">
    <location>
        <begin position="277"/>
        <end position="286"/>
    </location>
</feature>
<feature type="transmembrane region" description="Helical" evidence="2">
    <location>
        <begin position="287"/>
        <end position="307"/>
    </location>
</feature>
<feature type="topological domain" description="Periplasmic" evidence="2">
    <location>
        <begin position="308"/>
        <end position="313"/>
    </location>
</feature>
<feature type="transmembrane region" description="Helical" evidence="2">
    <location>
        <begin position="314"/>
        <end position="334"/>
    </location>
</feature>
<feature type="topological domain" description="Cytoplasmic" evidence="2">
    <location>
        <begin position="335"/>
        <end position="346"/>
    </location>
</feature>
<feature type="transmembrane region" description="Helical" evidence="2">
    <location>
        <begin position="347"/>
        <end position="367"/>
    </location>
</feature>
<feature type="topological domain" description="Periplasmic" evidence="2">
    <location>
        <begin position="368"/>
        <end position="378"/>
    </location>
</feature>
<feature type="transmembrane region" description="Helical" evidence="2">
    <location>
        <begin position="379"/>
        <end position="399"/>
    </location>
</feature>
<feature type="topological domain" description="Cytoplasmic" evidence="2">
    <location>
        <begin position="400"/>
        <end position="410"/>
    </location>
</feature>
<accession>E0T2N0</accession>
<name>MDFA_EDWTF</name>
<protein>
    <recommendedName>
        <fullName>Multidrug transporter MdfA</fullName>
    </recommendedName>
</protein>
<evidence type="ECO:0000250" key="1"/>
<evidence type="ECO:0000255" key="2"/>
<evidence type="ECO:0000305" key="3"/>
<gene>
    <name type="primary">mdfA</name>
    <name type="ordered locus">ETAF_3150</name>
</gene>
<organism>
    <name type="scientific">Edwardsiella tarda (strain FL6-60)</name>
    <dbReference type="NCBI Taxonomy" id="718251"/>
    <lineage>
        <taxon>Bacteria</taxon>
        <taxon>Pseudomonadati</taxon>
        <taxon>Pseudomonadota</taxon>
        <taxon>Gammaproteobacteria</taxon>
        <taxon>Enterobacterales</taxon>
        <taxon>Hafniaceae</taxon>
        <taxon>Edwardsiella</taxon>
    </lineage>
</organism>
<reference key="1">
    <citation type="submission" date="2010-08" db="EMBL/GenBank/DDBJ databases">
        <title>Genome comparisons of Edwardsiella bacteria analysed using deep sequencing technology.</title>
        <authorList>
            <person name="van Soest J.J."/>
            <person name="Henkel C.V."/>
            <person name="Jansen H.J."/>
            <person name="van den Hondel C.A.M.J.J."/>
            <person name="Bloemberg G.V."/>
            <person name="Meijer A.H."/>
            <person name="Spaink H.P."/>
        </authorList>
    </citation>
    <scope>NUCLEOTIDE SEQUENCE [LARGE SCALE GENOMIC DNA]</scope>
    <source>
        <strain>FL6-60</strain>
    </source>
</reference>
<keyword id="KW-0046">Antibiotic resistance</keyword>
<keyword id="KW-0997">Cell inner membrane</keyword>
<keyword id="KW-1003">Cell membrane</keyword>
<keyword id="KW-0472">Membrane</keyword>
<keyword id="KW-1185">Reference proteome</keyword>
<keyword id="KW-0812">Transmembrane</keyword>
<keyword id="KW-1133">Transmembrane helix</keyword>
<keyword id="KW-0813">Transport</keyword>